<gene>
    <name type="primary">PR2</name>
</gene>
<accession>P27538</accession>
<organism>
    <name type="scientific">Petroselinum crispum</name>
    <name type="common">Parsley</name>
    <name type="synonym">Petroselinum hortense</name>
    <dbReference type="NCBI Taxonomy" id="4043"/>
    <lineage>
        <taxon>Eukaryota</taxon>
        <taxon>Viridiplantae</taxon>
        <taxon>Streptophyta</taxon>
        <taxon>Embryophyta</taxon>
        <taxon>Tracheophyta</taxon>
        <taxon>Spermatophyta</taxon>
        <taxon>Magnoliopsida</taxon>
        <taxon>eudicotyledons</taxon>
        <taxon>Gunneridae</taxon>
        <taxon>Pentapetalae</taxon>
        <taxon>asterids</taxon>
        <taxon>campanulids</taxon>
        <taxon>Apiales</taxon>
        <taxon>Apiaceae</taxon>
        <taxon>Apioideae</taxon>
        <taxon>apioid superclade</taxon>
        <taxon>Apieae</taxon>
        <taxon>Petroselinum</taxon>
    </lineage>
</organism>
<keyword id="KW-0568">Pathogenesis-related protein</keyword>
<keyword id="KW-0611">Plant defense</keyword>
<protein>
    <recommendedName>
        <fullName>Pathogenesis-related protein 2</fullName>
    </recommendedName>
</protein>
<reference key="1">
    <citation type="journal article" date="1990" name="EMBO J.">
        <title>A 125 bp promoter fragment is sufficient for strong elicitor-mediated gene activation in parsley.</title>
        <authorList>
            <person name="van de Loecht U."/>
            <person name="Meier I."/>
            <person name="Hahlbrock K."/>
            <person name="Somssich I.E."/>
        </authorList>
    </citation>
    <scope>NUCLEOTIDE SEQUENCE [GENOMIC DNA / MRNA]</scope>
</reference>
<sequence length="158" mass="16800">MGAVTTDVEVASSVPAQTIYKGFLLDMDNIIPKVLPQAIKSIEIISGDGGAGTIKKVTLGEVSQFTVVKQRIDEIDAEALKYSYSIIEGDLLLGIIESITSKFTVVPTDGGCIVKNTTIYTPIGDAVIPEENVKEATEQSGMVFKAIEAYLLANPGAY</sequence>
<name>PR2_PETCR</name>
<dbReference type="EMBL" id="X55736">
    <property type="protein sequence ID" value="CAA39268.1"/>
    <property type="molecule type" value="Genomic_DNA"/>
</dbReference>
<dbReference type="EMBL" id="X58698">
    <property type="protein sequence ID" value="CAA41541.1"/>
    <property type="molecule type" value="mRNA"/>
</dbReference>
<dbReference type="PIR" id="S12568">
    <property type="entry name" value="S12568"/>
</dbReference>
<dbReference type="SMR" id="P27538"/>
<dbReference type="GO" id="GO:0005737">
    <property type="term" value="C:cytoplasm"/>
    <property type="evidence" value="ECO:0007669"/>
    <property type="project" value="TreeGrafter"/>
</dbReference>
<dbReference type="GO" id="GO:0005634">
    <property type="term" value="C:nucleus"/>
    <property type="evidence" value="ECO:0007669"/>
    <property type="project" value="TreeGrafter"/>
</dbReference>
<dbReference type="GO" id="GO:0010427">
    <property type="term" value="F:abscisic acid binding"/>
    <property type="evidence" value="ECO:0007669"/>
    <property type="project" value="InterPro"/>
</dbReference>
<dbReference type="GO" id="GO:0004864">
    <property type="term" value="F:protein phosphatase inhibitor activity"/>
    <property type="evidence" value="ECO:0007669"/>
    <property type="project" value="InterPro"/>
</dbReference>
<dbReference type="GO" id="GO:0038023">
    <property type="term" value="F:signaling receptor activity"/>
    <property type="evidence" value="ECO:0007669"/>
    <property type="project" value="InterPro"/>
</dbReference>
<dbReference type="GO" id="GO:0009738">
    <property type="term" value="P:abscisic acid-activated signaling pathway"/>
    <property type="evidence" value="ECO:0007669"/>
    <property type="project" value="InterPro"/>
</dbReference>
<dbReference type="GO" id="GO:0006952">
    <property type="term" value="P:defense response"/>
    <property type="evidence" value="ECO:0007669"/>
    <property type="project" value="UniProtKB-KW"/>
</dbReference>
<dbReference type="CDD" id="cd07816">
    <property type="entry name" value="Bet_v1-like"/>
    <property type="match status" value="1"/>
</dbReference>
<dbReference type="FunFam" id="3.30.530.20:FF:000007">
    <property type="entry name" value="Major pollen allergen Bet v 1-A"/>
    <property type="match status" value="1"/>
</dbReference>
<dbReference type="Gene3D" id="3.30.530.20">
    <property type="match status" value="1"/>
</dbReference>
<dbReference type="InterPro" id="IPR000916">
    <property type="entry name" value="Bet_v_I/MLP"/>
</dbReference>
<dbReference type="InterPro" id="IPR024949">
    <property type="entry name" value="Bet_v_I_allergen"/>
</dbReference>
<dbReference type="InterPro" id="IPR050279">
    <property type="entry name" value="Plant_def-hormone_signal"/>
</dbReference>
<dbReference type="InterPro" id="IPR023393">
    <property type="entry name" value="START-like_dom_sf"/>
</dbReference>
<dbReference type="PANTHER" id="PTHR31213">
    <property type="entry name" value="OS08G0374000 PROTEIN-RELATED"/>
    <property type="match status" value="1"/>
</dbReference>
<dbReference type="PANTHER" id="PTHR31213:SF55">
    <property type="entry name" value="STRESS-INDUCED PROTEIN SAM22"/>
    <property type="match status" value="1"/>
</dbReference>
<dbReference type="Pfam" id="PF00407">
    <property type="entry name" value="Bet_v_1"/>
    <property type="match status" value="1"/>
</dbReference>
<dbReference type="PRINTS" id="PR00634">
    <property type="entry name" value="BETALLERGEN"/>
</dbReference>
<dbReference type="SMART" id="SM01037">
    <property type="entry name" value="Bet_v_1"/>
    <property type="match status" value="1"/>
</dbReference>
<dbReference type="SUPFAM" id="SSF55961">
    <property type="entry name" value="Bet v1-like"/>
    <property type="match status" value="1"/>
</dbReference>
<dbReference type="PROSITE" id="PS00451">
    <property type="entry name" value="PATHOGENESIS_BETVI"/>
    <property type="match status" value="1"/>
</dbReference>
<evidence type="ECO:0000305" key="1"/>
<feature type="chain" id="PRO_0000154164" description="Pathogenesis-related protein 2">
    <location>
        <begin position="1"/>
        <end position="158"/>
    </location>
</feature>
<comment type="similarity">
    <text evidence="1">Belongs to the BetVI family.</text>
</comment>
<proteinExistence type="evidence at transcript level"/>